<reference key="1">
    <citation type="journal article" date="1989" name="Mol. Gen. Genet.">
        <title>Nucleotide sequence, organization, and nature of the protein products of the carotenoid biosynthesis gene cluster of Rhodobacter capsulatus.</title>
        <authorList>
            <person name="Armstrong G.A."/>
            <person name="Alberti M."/>
            <person name="Leach F."/>
            <person name="Hearst J.E."/>
        </authorList>
    </citation>
    <scope>NUCLEOTIDE SEQUENCE [GENOMIC DNA]</scope>
    <source>
        <strain>ATCC BAA-309 / NBRC 16581 / SB1003</strain>
    </source>
</reference>
<reference key="2">
    <citation type="journal article" date="2010" name="J. Bacteriol.">
        <title>Complete genome sequence of the photosynthetic purple nonsulfur bacterium Rhodobacter capsulatus SB 1003.</title>
        <authorList>
            <person name="Strnad H."/>
            <person name="Lapidus A."/>
            <person name="Paces J."/>
            <person name="Ulbrich P."/>
            <person name="Vlcek C."/>
            <person name="Paces V."/>
            <person name="Haselkorn R."/>
        </authorList>
    </citation>
    <scope>NUCLEOTIDE SEQUENCE [LARGE SCALE GENOMIC DNA]</scope>
    <source>
        <strain>ATCC BAA-309 / NBRC 16581 / SB1003</strain>
    </source>
</reference>
<name>CRTK_RHOCB</name>
<comment type="pathway">
    <text>Carotenoid biosynthesis; spheroidene biosynthesis.</text>
</comment>
<comment type="subcellular location">
    <subcellularLocation>
        <location evidence="2">Cell inner membrane</location>
        <topology evidence="2">Multi-pass membrane protein</topology>
    </subcellularLocation>
</comment>
<comment type="similarity">
    <text evidence="2">Belongs to the TspO/BZRP family.</text>
</comment>
<feature type="chain" id="PRO_0000191000" description="Protein CrtK">
    <location>
        <begin position="1"/>
        <end position="160"/>
    </location>
</feature>
<feature type="transmembrane region" description="Helical" evidence="1">
    <location>
        <begin position="3"/>
        <end position="23"/>
    </location>
</feature>
<feature type="transmembrane region" description="Helical" evidence="1">
    <location>
        <begin position="37"/>
        <end position="57"/>
    </location>
</feature>
<feature type="transmembrane region" description="Helical" evidence="1">
    <location>
        <begin position="76"/>
        <end position="96"/>
    </location>
</feature>
<feature type="transmembrane region" description="Helical" evidence="1">
    <location>
        <begin position="101"/>
        <end position="121"/>
    </location>
</feature>
<feature type="transmembrane region" description="Helical" evidence="1">
    <location>
        <begin position="129"/>
        <end position="149"/>
    </location>
</feature>
<keyword id="KW-0125">Carotenoid biosynthesis</keyword>
<keyword id="KW-0997">Cell inner membrane</keyword>
<keyword id="KW-1003">Cell membrane</keyword>
<keyword id="KW-0149">Chlorophyll biosynthesis</keyword>
<keyword id="KW-0472">Membrane</keyword>
<keyword id="KW-0602">Photosynthesis</keyword>
<keyword id="KW-1185">Reference proteome</keyword>
<keyword id="KW-0812">Transmembrane</keyword>
<keyword id="KW-1133">Transmembrane helix</keyword>
<gene>
    <name type="primary">crtK</name>
    <name type="synonym">tspO</name>
    <name type="ordered locus">RCAP_rcc00681</name>
</gene>
<organism>
    <name type="scientific">Rhodobacter capsulatus (strain ATCC BAA-309 / NBRC 16581 / SB1003)</name>
    <dbReference type="NCBI Taxonomy" id="272942"/>
    <lineage>
        <taxon>Bacteria</taxon>
        <taxon>Pseudomonadati</taxon>
        <taxon>Pseudomonadota</taxon>
        <taxon>Alphaproteobacteria</taxon>
        <taxon>Rhodobacterales</taxon>
        <taxon>Rhodobacter group</taxon>
        <taxon>Rhodobacter</taxon>
    </lineage>
</organism>
<proteinExistence type="inferred from homology"/>
<evidence type="ECO:0000255" key="1"/>
<evidence type="ECO:0000305" key="2"/>
<sequence>MSLTLFAVYFVACACAGATGAIFSPGAWYDSLKKPSWVPPNWLFPVAWSTLYILMSISAARVSGLAMENELAVLGLAFWAVQIAVNTLWTPIFFGLHRLAGGMLVLVLLWLSVFATCVLFWSVDWLSGLMFVPYVIWVTVAGALNFSVWRLNPGEKPITL</sequence>
<accession>P17057</accession>
<accession>D5AP74</accession>
<protein>
    <recommendedName>
        <fullName>Protein CrtK</fullName>
    </recommendedName>
</protein>
<dbReference type="EMBL" id="X52291">
    <property type="protein sequence ID" value="CAA36535.1"/>
    <property type="molecule type" value="Genomic_DNA"/>
</dbReference>
<dbReference type="EMBL" id="Z11165">
    <property type="protein sequence ID" value="CAA77542.1"/>
    <property type="molecule type" value="Genomic_DNA"/>
</dbReference>
<dbReference type="EMBL" id="CP001312">
    <property type="protein sequence ID" value="ADE84446.1"/>
    <property type="molecule type" value="Genomic_DNA"/>
</dbReference>
<dbReference type="PIR" id="S04404">
    <property type="entry name" value="S04404"/>
</dbReference>
<dbReference type="RefSeq" id="WP_013066425.1">
    <property type="nucleotide sequence ID" value="NC_014034.1"/>
</dbReference>
<dbReference type="SMR" id="P17057"/>
<dbReference type="STRING" id="272942.RCAP_rcc00681"/>
<dbReference type="GeneID" id="31489627"/>
<dbReference type="KEGG" id="rcp:RCAP_rcc00681"/>
<dbReference type="eggNOG" id="COG3476">
    <property type="taxonomic scope" value="Bacteria"/>
</dbReference>
<dbReference type="HOGENOM" id="CLU_091805_2_0_5"/>
<dbReference type="OrthoDB" id="9795496at2"/>
<dbReference type="UniPathway" id="UPA00683"/>
<dbReference type="Proteomes" id="UP000002361">
    <property type="component" value="Chromosome"/>
</dbReference>
<dbReference type="GO" id="GO:0005886">
    <property type="term" value="C:plasma membrane"/>
    <property type="evidence" value="ECO:0007669"/>
    <property type="project" value="UniProtKB-SubCell"/>
</dbReference>
<dbReference type="GO" id="GO:0016117">
    <property type="term" value="P:carotenoid biosynthetic process"/>
    <property type="evidence" value="ECO:0007669"/>
    <property type="project" value="UniProtKB-KW"/>
</dbReference>
<dbReference type="GO" id="GO:0015995">
    <property type="term" value="P:chlorophyll biosynthetic process"/>
    <property type="evidence" value="ECO:0007669"/>
    <property type="project" value="UniProtKB-KW"/>
</dbReference>
<dbReference type="GO" id="GO:0015979">
    <property type="term" value="P:photosynthesis"/>
    <property type="evidence" value="ECO:0007669"/>
    <property type="project" value="UniProtKB-KW"/>
</dbReference>
<dbReference type="CDD" id="cd15904">
    <property type="entry name" value="TSPO_MBR"/>
    <property type="match status" value="1"/>
</dbReference>
<dbReference type="FunFam" id="1.20.1260.100:FF:000001">
    <property type="entry name" value="translocator protein 2"/>
    <property type="match status" value="1"/>
</dbReference>
<dbReference type="Gene3D" id="1.20.1260.100">
    <property type="entry name" value="TspO/MBR protein"/>
    <property type="match status" value="1"/>
</dbReference>
<dbReference type="InterPro" id="IPR038330">
    <property type="entry name" value="TspO/MBR-related_sf"/>
</dbReference>
<dbReference type="InterPro" id="IPR004307">
    <property type="entry name" value="TspO_MBR"/>
</dbReference>
<dbReference type="NCBIfam" id="NF047825">
    <property type="entry name" value="T-richsensTspOAlph"/>
    <property type="match status" value="1"/>
</dbReference>
<dbReference type="PANTHER" id="PTHR10057">
    <property type="entry name" value="PERIPHERAL-TYPE BENZODIAZEPINE RECEPTOR"/>
    <property type="match status" value="1"/>
</dbReference>
<dbReference type="PANTHER" id="PTHR10057:SF0">
    <property type="entry name" value="TRANSLOCATOR PROTEIN"/>
    <property type="match status" value="1"/>
</dbReference>
<dbReference type="Pfam" id="PF03073">
    <property type="entry name" value="TspO_MBR"/>
    <property type="match status" value="1"/>
</dbReference>
<dbReference type="PIRSF" id="PIRSF005859">
    <property type="entry name" value="PBR"/>
    <property type="match status" value="1"/>
</dbReference>